<accession>Q7VDY7</accession>
<feature type="chain" id="PRO_0000154686" description="Large ribosomal subunit protein uL10">
    <location>
        <begin position="1"/>
        <end position="175"/>
    </location>
</feature>
<sequence length="175" mass="18735">MGRTLESKKQIVEEIKGLLDKADMALVLDYQGLSIKEMSDLRSRLEQSSGICKVTKNTLMRKAINGDATWSGLESLLNGTNAFVLVKGDVGSALKAVQAFQKETKKSETKGGLYEGKLLTQDEIKAIAALPSKEALMAQIAGALNSITTKIAVGVNEIPSGLARSLKQHAENSES</sequence>
<evidence type="ECO:0000255" key="1">
    <source>
        <dbReference type="HAMAP-Rule" id="MF_00362"/>
    </source>
</evidence>
<evidence type="ECO:0000305" key="2"/>
<dbReference type="EMBL" id="AE017126">
    <property type="protein sequence ID" value="AAP99274.1"/>
    <property type="molecule type" value="Genomic_DNA"/>
</dbReference>
<dbReference type="RefSeq" id="NP_874622.1">
    <property type="nucleotide sequence ID" value="NC_005042.1"/>
</dbReference>
<dbReference type="RefSeq" id="WP_011124383.1">
    <property type="nucleotide sequence ID" value="NC_005042.1"/>
</dbReference>
<dbReference type="SMR" id="Q7VDY7"/>
<dbReference type="STRING" id="167539.Pro_0228"/>
<dbReference type="EnsemblBacteria" id="AAP99274">
    <property type="protein sequence ID" value="AAP99274"/>
    <property type="gene ID" value="Pro_0228"/>
</dbReference>
<dbReference type="KEGG" id="pma:Pro_0228"/>
<dbReference type="PATRIC" id="fig|167539.5.peg.235"/>
<dbReference type="eggNOG" id="COG0244">
    <property type="taxonomic scope" value="Bacteria"/>
</dbReference>
<dbReference type="HOGENOM" id="CLU_092227_1_1_3"/>
<dbReference type="OrthoDB" id="9808307at2"/>
<dbReference type="Proteomes" id="UP000001420">
    <property type="component" value="Chromosome"/>
</dbReference>
<dbReference type="GO" id="GO:1990904">
    <property type="term" value="C:ribonucleoprotein complex"/>
    <property type="evidence" value="ECO:0007669"/>
    <property type="project" value="UniProtKB-KW"/>
</dbReference>
<dbReference type="GO" id="GO:0005840">
    <property type="term" value="C:ribosome"/>
    <property type="evidence" value="ECO:0007669"/>
    <property type="project" value="UniProtKB-KW"/>
</dbReference>
<dbReference type="GO" id="GO:0070180">
    <property type="term" value="F:large ribosomal subunit rRNA binding"/>
    <property type="evidence" value="ECO:0007669"/>
    <property type="project" value="UniProtKB-UniRule"/>
</dbReference>
<dbReference type="GO" id="GO:0006412">
    <property type="term" value="P:translation"/>
    <property type="evidence" value="ECO:0007669"/>
    <property type="project" value="UniProtKB-UniRule"/>
</dbReference>
<dbReference type="CDD" id="cd05797">
    <property type="entry name" value="Ribosomal_L10"/>
    <property type="match status" value="1"/>
</dbReference>
<dbReference type="Gene3D" id="3.30.70.1730">
    <property type="match status" value="1"/>
</dbReference>
<dbReference type="Gene3D" id="6.10.250.290">
    <property type="match status" value="1"/>
</dbReference>
<dbReference type="HAMAP" id="MF_00362">
    <property type="entry name" value="Ribosomal_uL10"/>
    <property type="match status" value="1"/>
</dbReference>
<dbReference type="InterPro" id="IPR001790">
    <property type="entry name" value="Ribosomal_uL10"/>
</dbReference>
<dbReference type="InterPro" id="IPR043141">
    <property type="entry name" value="Ribosomal_uL10-like_sf"/>
</dbReference>
<dbReference type="InterPro" id="IPR022973">
    <property type="entry name" value="Ribosomal_uL10_bac"/>
</dbReference>
<dbReference type="InterPro" id="IPR047865">
    <property type="entry name" value="Ribosomal_uL10_bac_type"/>
</dbReference>
<dbReference type="NCBIfam" id="NF000955">
    <property type="entry name" value="PRK00099.1-1"/>
    <property type="match status" value="1"/>
</dbReference>
<dbReference type="PANTHER" id="PTHR11560">
    <property type="entry name" value="39S RIBOSOMAL PROTEIN L10, MITOCHONDRIAL"/>
    <property type="match status" value="1"/>
</dbReference>
<dbReference type="Pfam" id="PF00466">
    <property type="entry name" value="Ribosomal_L10"/>
    <property type="match status" value="1"/>
</dbReference>
<dbReference type="SUPFAM" id="SSF160369">
    <property type="entry name" value="Ribosomal protein L10-like"/>
    <property type="match status" value="1"/>
</dbReference>
<organism>
    <name type="scientific">Prochlorococcus marinus (strain SARG / CCMP1375 / SS120)</name>
    <dbReference type="NCBI Taxonomy" id="167539"/>
    <lineage>
        <taxon>Bacteria</taxon>
        <taxon>Bacillati</taxon>
        <taxon>Cyanobacteriota</taxon>
        <taxon>Cyanophyceae</taxon>
        <taxon>Synechococcales</taxon>
        <taxon>Prochlorococcaceae</taxon>
        <taxon>Prochlorococcus</taxon>
    </lineage>
</organism>
<proteinExistence type="inferred from homology"/>
<keyword id="KW-1185">Reference proteome</keyword>
<keyword id="KW-0687">Ribonucleoprotein</keyword>
<keyword id="KW-0689">Ribosomal protein</keyword>
<keyword id="KW-0694">RNA-binding</keyword>
<keyword id="KW-0699">rRNA-binding</keyword>
<comment type="function">
    <text evidence="1">Forms part of the ribosomal stalk, playing a central role in the interaction of the ribosome with GTP-bound translation factors.</text>
</comment>
<comment type="subunit">
    <text evidence="1">Part of the ribosomal stalk of the 50S ribosomal subunit. The N-terminus interacts with L11 and the large rRNA to form the base of the stalk. The C-terminus forms an elongated spine to which L12 dimers bind in a sequential fashion forming a multimeric L10(L12)X complex.</text>
</comment>
<comment type="similarity">
    <text evidence="1">Belongs to the universal ribosomal protein uL10 family.</text>
</comment>
<name>RL10_PROMA</name>
<reference key="1">
    <citation type="journal article" date="2003" name="Proc. Natl. Acad. Sci. U.S.A.">
        <title>Genome sequence of the cyanobacterium Prochlorococcus marinus SS120, a nearly minimal oxyphototrophic genome.</title>
        <authorList>
            <person name="Dufresne A."/>
            <person name="Salanoubat M."/>
            <person name="Partensky F."/>
            <person name="Artiguenave F."/>
            <person name="Axmann I.M."/>
            <person name="Barbe V."/>
            <person name="Duprat S."/>
            <person name="Galperin M.Y."/>
            <person name="Koonin E.V."/>
            <person name="Le Gall F."/>
            <person name="Makarova K.S."/>
            <person name="Ostrowski M."/>
            <person name="Oztas S."/>
            <person name="Robert C."/>
            <person name="Rogozin I.B."/>
            <person name="Scanlan D.J."/>
            <person name="Tandeau de Marsac N."/>
            <person name="Weissenbach J."/>
            <person name="Wincker P."/>
            <person name="Wolf Y.I."/>
            <person name="Hess W.R."/>
        </authorList>
    </citation>
    <scope>NUCLEOTIDE SEQUENCE [LARGE SCALE GENOMIC DNA]</scope>
    <source>
        <strain>SARG / CCMP1375 / SS120</strain>
    </source>
</reference>
<protein>
    <recommendedName>
        <fullName evidence="1">Large ribosomal subunit protein uL10</fullName>
    </recommendedName>
    <alternativeName>
        <fullName evidence="2">50S ribosomal protein L10</fullName>
    </alternativeName>
</protein>
<gene>
    <name evidence="1" type="primary">rplJ</name>
    <name evidence="1" type="synonym">rpl10</name>
    <name type="ordered locus">Pro_0228</name>
</gene>